<feature type="chain" id="PRO_0000100639" description="Adenosine 5'-phosphosulfate reductase">
    <location>
        <begin position="1"/>
        <end position="254"/>
    </location>
</feature>
<feature type="active site" description="Nucleophile; cysteine thiosulfonate intermediate" evidence="1">
    <location>
        <position position="238"/>
    </location>
</feature>
<feature type="binding site" evidence="1">
    <location>
        <position position="131"/>
    </location>
    <ligand>
        <name>[4Fe-4S] cluster</name>
        <dbReference type="ChEBI" id="CHEBI:49883"/>
    </ligand>
</feature>
<feature type="binding site" evidence="1">
    <location>
        <position position="132"/>
    </location>
    <ligand>
        <name>[4Fe-4S] cluster</name>
        <dbReference type="ChEBI" id="CHEBI:49883"/>
    </ligand>
</feature>
<feature type="binding site" evidence="1">
    <location>
        <position position="212"/>
    </location>
    <ligand>
        <name>[4Fe-4S] cluster</name>
        <dbReference type="ChEBI" id="CHEBI:49883"/>
    </ligand>
</feature>
<feature type="binding site" evidence="1">
    <location>
        <position position="215"/>
    </location>
    <ligand>
        <name>[4Fe-4S] cluster</name>
        <dbReference type="ChEBI" id="CHEBI:49883"/>
    </ligand>
</feature>
<name>CYSH_RHILO</name>
<keyword id="KW-0963">Cytoplasm</keyword>
<keyword id="KW-0408">Iron</keyword>
<keyword id="KW-0411">Iron-sulfur</keyword>
<keyword id="KW-0479">Metal-binding</keyword>
<keyword id="KW-0560">Oxidoreductase</keyword>
<sequence length="254" mass="27605">MLAKPRPLDHIGDADDGVAAKAAGLDALYGHLKPLEIIERSARELFHDEIAAVSSFGADSAVLLHMIAEIDRTLPVIFLDTGKHFEETLGYRDALVADFGLTNIQVIKPEEAALARIDPTGNLHQSNTDACCDVRKVEPLARGVAPFRAWFTGRKRFQASTRAALPVFEAVGARIRINPLAHWTTSDQADYMRAHALRENPLVAYGYLSIGCFPCTQPVQPGEDARSGRWAGHAKTECGIHLSGLEVSLTDASL</sequence>
<protein>
    <recommendedName>
        <fullName evidence="1">Adenosine 5'-phosphosulfate reductase</fullName>
        <shortName evidence="1">APS reductase</shortName>
        <ecNumber evidence="1">1.8.4.10</ecNumber>
    </recommendedName>
    <alternativeName>
        <fullName evidence="1">5'-adenylylsulfate reductase</fullName>
    </alternativeName>
    <alternativeName>
        <fullName evidence="1">Thioredoxin-dependent 5'-adenylylsulfate reductase</fullName>
    </alternativeName>
</protein>
<proteinExistence type="inferred from homology"/>
<comment type="function">
    <text evidence="1">Catalyzes the formation of sulfite from adenosine 5'-phosphosulfate (APS) using thioredoxin as an electron donor.</text>
</comment>
<comment type="catalytic activity">
    <reaction evidence="1">
        <text>[thioredoxin]-disulfide + sulfite + AMP + 2 H(+) = adenosine 5'-phosphosulfate + [thioredoxin]-dithiol</text>
        <dbReference type="Rhea" id="RHEA:21976"/>
        <dbReference type="Rhea" id="RHEA-COMP:10698"/>
        <dbReference type="Rhea" id="RHEA-COMP:10700"/>
        <dbReference type="ChEBI" id="CHEBI:15378"/>
        <dbReference type="ChEBI" id="CHEBI:17359"/>
        <dbReference type="ChEBI" id="CHEBI:29950"/>
        <dbReference type="ChEBI" id="CHEBI:50058"/>
        <dbReference type="ChEBI" id="CHEBI:58243"/>
        <dbReference type="ChEBI" id="CHEBI:456215"/>
        <dbReference type="EC" id="1.8.4.10"/>
    </reaction>
</comment>
<comment type="cofactor">
    <cofactor evidence="1">
        <name>[4Fe-4S] cluster</name>
        <dbReference type="ChEBI" id="CHEBI:49883"/>
    </cofactor>
    <text evidence="1">Binds 1 [4Fe-4S] cluster per subunit.</text>
</comment>
<comment type="pathway">
    <text evidence="1">Sulfur metabolism; hydrogen sulfide biosynthesis; sulfite from sulfate.</text>
</comment>
<comment type="subcellular location">
    <subcellularLocation>
        <location evidence="1">Cytoplasm</location>
    </subcellularLocation>
</comment>
<comment type="similarity">
    <text evidence="1">Belongs to the PAPS reductase family. CysH subfamily.</text>
</comment>
<gene>
    <name evidence="1" type="primary">cysH</name>
    <name type="ordered locus">mll3228</name>
</gene>
<dbReference type="EC" id="1.8.4.10" evidence="1"/>
<dbReference type="EMBL" id="BA000012">
    <property type="protein sequence ID" value="BAB50167.1"/>
    <property type="molecule type" value="Genomic_DNA"/>
</dbReference>
<dbReference type="RefSeq" id="WP_010911513.1">
    <property type="nucleotide sequence ID" value="NC_002678.2"/>
</dbReference>
<dbReference type="SMR" id="Q98GP9"/>
<dbReference type="KEGG" id="mlo:mll3228"/>
<dbReference type="eggNOG" id="COG0175">
    <property type="taxonomic scope" value="Bacteria"/>
</dbReference>
<dbReference type="HOGENOM" id="CLU_044089_2_1_5"/>
<dbReference type="Proteomes" id="UP000000552">
    <property type="component" value="Chromosome"/>
</dbReference>
<dbReference type="GO" id="GO:0005737">
    <property type="term" value="C:cytoplasm"/>
    <property type="evidence" value="ECO:0007669"/>
    <property type="project" value="UniProtKB-SubCell"/>
</dbReference>
<dbReference type="GO" id="GO:0051539">
    <property type="term" value="F:4 iron, 4 sulfur cluster binding"/>
    <property type="evidence" value="ECO:0007669"/>
    <property type="project" value="UniProtKB-UniRule"/>
</dbReference>
<dbReference type="GO" id="GO:0043866">
    <property type="term" value="F:adenylyl-sulfate reductase (thioredoxin) activity"/>
    <property type="evidence" value="ECO:0007669"/>
    <property type="project" value="UniProtKB-EC"/>
</dbReference>
<dbReference type="GO" id="GO:0046872">
    <property type="term" value="F:metal ion binding"/>
    <property type="evidence" value="ECO:0007669"/>
    <property type="project" value="UniProtKB-KW"/>
</dbReference>
<dbReference type="GO" id="GO:0004604">
    <property type="term" value="F:phosphoadenylyl-sulfate reductase (thioredoxin) activity"/>
    <property type="evidence" value="ECO:0007669"/>
    <property type="project" value="UniProtKB-UniRule"/>
</dbReference>
<dbReference type="GO" id="GO:0070814">
    <property type="term" value="P:hydrogen sulfide biosynthetic process"/>
    <property type="evidence" value="ECO:0007669"/>
    <property type="project" value="UniProtKB-UniRule"/>
</dbReference>
<dbReference type="GO" id="GO:0019379">
    <property type="term" value="P:sulfate assimilation, phosphoadenylyl sulfate reduction by phosphoadenylyl-sulfate reductase (thioredoxin)"/>
    <property type="evidence" value="ECO:0007669"/>
    <property type="project" value="UniProtKB-UniRule"/>
</dbReference>
<dbReference type="CDD" id="cd23945">
    <property type="entry name" value="PAPS_reductase"/>
    <property type="match status" value="1"/>
</dbReference>
<dbReference type="Gene3D" id="3.40.50.620">
    <property type="entry name" value="HUPs"/>
    <property type="match status" value="1"/>
</dbReference>
<dbReference type="HAMAP" id="MF_00063">
    <property type="entry name" value="CysH"/>
    <property type="match status" value="1"/>
</dbReference>
<dbReference type="InterPro" id="IPR004511">
    <property type="entry name" value="PAPS/APS_Rdtase"/>
</dbReference>
<dbReference type="InterPro" id="IPR002500">
    <property type="entry name" value="PAPS_reduct_dom"/>
</dbReference>
<dbReference type="InterPro" id="IPR014729">
    <property type="entry name" value="Rossmann-like_a/b/a_fold"/>
</dbReference>
<dbReference type="NCBIfam" id="TIGR00434">
    <property type="entry name" value="cysH"/>
    <property type="match status" value="1"/>
</dbReference>
<dbReference type="NCBIfam" id="NF002537">
    <property type="entry name" value="PRK02090.1"/>
    <property type="match status" value="1"/>
</dbReference>
<dbReference type="PANTHER" id="PTHR46509">
    <property type="entry name" value="PHOSPHOADENOSINE PHOSPHOSULFATE REDUCTASE"/>
    <property type="match status" value="1"/>
</dbReference>
<dbReference type="PANTHER" id="PTHR46509:SF1">
    <property type="entry name" value="PHOSPHOADENOSINE PHOSPHOSULFATE REDUCTASE"/>
    <property type="match status" value="1"/>
</dbReference>
<dbReference type="Pfam" id="PF01507">
    <property type="entry name" value="PAPS_reduct"/>
    <property type="match status" value="1"/>
</dbReference>
<dbReference type="PIRSF" id="PIRSF000857">
    <property type="entry name" value="PAPS_reductase"/>
    <property type="match status" value="1"/>
</dbReference>
<dbReference type="SUPFAM" id="SSF52402">
    <property type="entry name" value="Adenine nucleotide alpha hydrolases-like"/>
    <property type="match status" value="1"/>
</dbReference>
<evidence type="ECO:0000255" key="1">
    <source>
        <dbReference type="HAMAP-Rule" id="MF_00063"/>
    </source>
</evidence>
<accession>Q98GP9</accession>
<reference key="1">
    <citation type="journal article" date="2000" name="DNA Res.">
        <title>Complete genome structure of the nitrogen-fixing symbiotic bacterium Mesorhizobium loti.</title>
        <authorList>
            <person name="Kaneko T."/>
            <person name="Nakamura Y."/>
            <person name="Sato S."/>
            <person name="Asamizu E."/>
            <person name="Kato T."/>
            <person name="Sasamoto S."/>
            <person name="Watanabe A."/>
            <person name="Idesawa K."/>
            <person name="Ishikawa A."/>
            <person name="Kawashima K."/>
            <person name="Kimura T."/>
            <person name="Kishida Y."/>
            <person name="Kiyokawa C."/>
            <person name="Kohara M."/>
            <person name="Matsumoto M."/>
            <person name="Matsuno A."/>
            <person name="Mochizuki Y."/>
            <person name="Nakayama S."/>
            <person name="Nakazaki N."/>
            <person name="Shimpo S."/>
            <person name="Sugimoto M."/>
            <person name="Takeuchi C."/>
            <person name="Yamada M."/>
            <person name="Tabata S."/>
        </authorList>
    </citation>
    <scope>NUCLEOTIDE SEQUENCE [LARGE SCALE GENOMIC DNA]</scope>
    <source>
        <strain>LMG 29417 / CECT 9101 / MAFF 303099</strain>
    </source>
</reference>
<organism>
    <name type="scientific">Mesorhizobium japonicum (strain LMG 29417 / CECT 9101 / MAFF 303099)</name>
    <name type="common">Mesorhizobium loti (strain MAFF 303099)</name>
    <dbReference type="NCBI Taxonomy" id="266835"/>
    <lineage>
        <taxon>Bacteria</taxon>
        <taxon>Pseudomonadati</taxon>
        <taxon>Pseudomonadota</taxon>
        <taxon>Alphaproteobacteria</taxon>
        <taxon>Hyphomicrobiales</taxon>
        <taxon>Phyllobacteriaceae</taxon>
        <taxon>Mesorhizobium</taxon>
    </lineage>
</organism>